<feature type="chain" id="PRO_0000176357" description="Elongation factor 4">
    <location>
        <begin position="1"/>
        <end position="610"/>
    </location>
</feature>
<feature type="domain" description="tr-type G">
    <location>
        <begin position="11"/>
        <end position="193"/>
    </location>
</feature>
<feature type="binding site" evidence="1">
    <location>
        <begin position="23"/>
        <end position="28"/>
    </location>
    <ligand>
        <name>GTP</name>
        <dbReference type="ChEBI" id="CHEBI:37565"/>
    </ligand>
</feature>
<feature type="binding site" evidence="1">
    <location>
        <begin position="140"/>
        <end position="143"/>
    </location>
    <ligand>
        <name>GTP</name>
        <dbReference type="ChEBI" id="CHEBI:37565"/>
    </ligand>
</feature>
<reference key="1">
    <citation type="journal article" date="2004" name="J. Infect. Dis.">
        <title>Progress toward characterization of the group A Streptococcus metagenome: complete genome sequence of a macrolide-resistant serotype M6 strain.</title>
        <authorList>
            <person name="Banks D.J."/>
            <person name="Porcella S.F."/>
            <person name="Barbian K.D."/>
            <person name="Beres S.B."/>
            <person name="Philips L.E."/>
            <person name="Voyich J.M."/>
            <person name="DeLeo F.R."/>
            <person name="Martin J.M."/>
            <person name="Somerville G.A."/>
            <person name="Musser J.M."/>
        </authorList>
    </citation>
    <scope>NUCLEOTIDE SEQUENCE [LARGE SCALE GENOMIC DNA]</scope>
    <source>
        <strain>ATCC BAA-946 / MGAS10394</strain>
    </source>
</reference>
<gene>
    <name evidence="1" type="primary">lepA</name>
    <name type="ordered locus">M6_Spy0796</name>
</gene>
<evidence type="ECO:0000255" key="1">
    <source>
        <dbReference type="HAMAP-Rule" id="MF_00071"/>
    </source>
</evidence>
<keyword id="KW-1003">Cell membrane</keyword>
<keyword id="KW-0342">GTP-binding</keyword>
<keyword id="KW-0378">Hydrolase</keyword>
<keyword id="KW-0472">Membrane</keyword>
<keyword id="KW-0547">Nucleotide-binding</keyword>
<keyword id="KW-0648">Protein biosynthesis</keyword>
<dbReference type="EC" id="3.6.5.n1" evidence="1"/>
<dbReference type="EMBL" id="CP000003">
    <property type="protein sequence ID" value="AAT86931.1"/>
    <property type="molecule type" value="Genomic_DNA"/>
</dbReference>
<dbReference type="RefSeq" id="WP_011184470.1">
    <property type="nucleotide sequence ID" value="NC_006086.1"/>
</dbReference>
<dbReference type="SMR" id="Q5XCD2"/>
<dbReference type="KEGG" id="spa:M6_Spy0796"/>
<dbReference type="HOGENOM" id="CLU_009995_3_3_9"/>
<dbReference type="Proteomes" id="UP000001167">
    <property type="component" value="Chromosome"/>
</dbReference>
<dbReference type="GO" id="GO:0005886">
    <property type="term" value="C:plasma membrane"/>
    <property type="evidence" value="ECO:0007669"/>
    <property type="project" value="UniProtKB-SubCell"/>
</dbReference>
<dbReference type="GO" id="GO:0005525">
    <property type="term" value="F:GTP binding"/>
    <property type="evidence" value="ECO:0007669"/>
    <property type="project" value="UniProtKB-UniRule"/>
</dbReference>
<dbReference type="GO" id="GO:0003924">
    <property type="term" value="F:GTPase activity"/>
    <property type="evidence" value="ECO:0007669"/>
    <property type="project" value="UniProtKB-UniRule"/>
</dbReference>
<dbReference type="GO" id="GO:0043022">
    <property type="term" value="F:ribosome binding"/>
    <property type="evidence" value="ECO:0007669"/>
    <property type="project" value="UniProtKB-UniRule"/>
</dbReference>
<dbReference type="GO" id="GO:0003746">
    <property type="term" value="F:translation elongation factor activity"/>
    <property type="evidence" value="ECO:0007669"/>
    <property type="project" value="UniProtKB-UniRule"/>
</dbReference>
<dbReference type="GO" id="GO:0045727">
    <property type="term" value="P:positive regulation of translation"/>
    <property type="evidence" value="ECO:0007669"/>
    <property type="project" value="UniProtKB-UniRule"/>
</dbReference>
<dbReference type="CDD" id="cd03699">
    <property type="entry name" value="EF4_II"/>
    <property type="match status" value="1"/>
</dbReference>
<dbReference type="CDD" id="cd16260">
    <property type="entry name" value="EF4_III"/>
    <property type="match status" value="1"/>
</dbReference>
<dbReference type="CDD" id="cd01890">
    <property type="entry name" value="LepA"/>
    <property type="match status" value="1"/>
</dbReference>
<dbReference type="CDD" id="cd03709">
    <property type="entry name" value="lepA_C"/>
    <property type="match status" value="1"/>
</dbReference>
<dbReference type="FunFam" id="3.40.50.300:FF:000078">
    <property type="entry name" value="Elongation factor 4"/>
    <property type="match status" value="1"/>
</dbReference>
<dbReference type="FunFam" id="2.40.30.10:FF:000015">
    <property type="entry name" value="Translation factor GUF1, mitochondrial"/>
    <property type="match status" value="1"/>
</dbReference>
<dbReference type="FunFam" id="3.30.70.240:FF:000007">
    <property type="entry name" value="Translation factor GUF1, mitochondrial"/>
    <property type="match status" value="1"/>
</dbReference>
<dbReference type="FunFam" id="3.30.70.2570:FF:000001">
    <property type="entry name" value="Translation factor GUF1, mitochondrial"/>
    <property type="match status" value="1"/>
</dbReference>
<dbReference type="FunFam" id="3.30.70.870:FF:000004">
    <property type="entry name" value="Translation factor GUF1, mitochondrial"/>
    <property type="match status" value="1"/>
</dbReference>
<dbReference type="Gene3D" id="3.30.70.240">
    <property type="match status" value="1"/>
</dbReference>
<dbReference type="Gene3D" id="3.30.70.2570">
    <property type="entry name" value="Elongation factor 4, C-terminal domain"/>
    <property type="match status" value="1"/>
</dbReference>
<dbReference type="Gene3D" id="3.30.70.870">
    <property type="entry name" value="Elongation Factor G (Translational Gtpase), domain 3"/>
    <property type="match status" value="1"/>
</dbReference>
<dbReference type="Gene3D" id="3.40.50.300">
    <property type="entry name" value="P-loop containing nucleotide triphosphate hydrolases"/>
    <property type="match status" value="1"/>
</dbReference>
<dbReference type="Gene3D" id="2.40.30.10">
    <property type="entry name" value="Translation factors"/>
    <property type="match status" value="1"/>
</dbReference>
<dbReference type="HAMAP" id="MF_00071">
    <property type="entry name" value="LepA"/>
    <property type="match status" value="1"/>
</dbReference>
<dbReference type="InterPro" id="IPR006297">
    <property type="entry name" value="EF-4"/>
</dbReference>
<dbReference type="InterPro" id="IPR041095">
    <property type="entry name" value="EFG_II"/>
</dbReference>
<dbReference type="InterPro" id="IPR035647">
    <property type="entry name" value="EFG_III/V"/>
</dbReference>
<dbReference type="InterPro" id="IPR000640">
    <property type="entry name" value="EFG_V-like"/>
</dbReference>
<dbReference type="InterPro" id="IPR004161">
    <property type="entry name" value="EFTu-like_2"/>
</dbReference>
<dbReference type="InterPro" id="IPR031157">
    <property type="entry name" value="G_TR_CS"/>
</dbReference>
<dbReference type="InterPro" id="IPR038363">
    <property type="entry name" value="LepA_C_sf"/>
</dbReference>
<dbReference type="InterPro" id="IPR013842">
    <property type="entry name" value="LepA_CTD"/>
</dbReference>
<dbReference type="InterPro" id="IPR035654">
    <property type="entry name" value="LepA_IV"/>
</dbReference>
<dbReference type="InterPro" id="IPR027417">
    <property type="entry name" value="P-loop_NTPase"/>
</dbReference>
<dbReference type="InterPro" id="IPR005225">
    <property type="entry name" value="Small_GTP-bd"/>
</dbReference>
<dbReference type="InterPro" id="IPR000795">
    <property type="entry name" value="T_Tr_GTP-bd_dom"/>
</dbReference>
<dbReference type="InterPro" id="IPR009000">
    <property type="entry name" value="Transl_B-barrel_sf"/>
</dbReference>
<dbReference type="NCBIfam" id="TIGR01393">
    <property type="entry name" value="lepA"/>
    <property type="match status" value="1"/>
</dbReference>
<dbReference type="NCBIfam" id="TIGR00231">
    <property type="entry name" value="small_GTP"/>
    <property type="match status" value="1"/>
</dbReference>
<dbReference type="PANTHER" id="PTHR43512:SF4">
    <property type="entry name" value="TRANSLATION FACTOR GUF1 HOMOLOG, CHLOROPLASTIC"/>
    <property type="match status" value="1"/>
</dbReference>
<dbReference type="PANTHER" id="PTHR43512">
    <property type="entry name" value="TRANSLATION FACTOR GUF1-RELATED"/>
    <property type="match status" value="1"/>
</dbReference>
<dbReference type="Pfam" id="PF00679">
    <property type="entry name" value="EFG_C"/>
    <property type="match status" value="1"/>
</dbReference>
<dbReference type="Pfam" id="PF14492">
    <property type="entry name" value="EFG_III"/>
    <property type="match status" value="1"/>
</dbReference>
<dbReference type="Pfam" id="PF00009">
    <property type="entry name" value="GTP_EFTU"/>
    <property type="match status" value="1"/>
</dbReference>
<dbReference type="Pfam" id="PF03144">
    <property type="entry name" value="GTP_EFTU_D2"/>
    <property type="match status" value="1"/>
</dbReference>
<dbReference type="Pfam" id="PF06421">
    <property type="entry name" value="LepA_C"/>
    <property type="match status" value="1"/>
</dbReference>
<dbReference type="PRINTS" id="PR00315">
    <property type="entry name" value="ELONGATNFCT"/>
</dbReference>
<dbReference type="SMART" id="SM00838">
    <property type="entry name" value="EFG_C"/>
    <property type="match status" value="1"/>
</dbReference>
<dbReference type="SUPFAM" id="SSF54980">
    <property type="entry name" value="EF-G C-terminal domain-like"/>
    <property type="match status" value="2"/>
</dbReference>
<dbReference type="SUPFAM" id="SSF52540">
    <property type="entry name" value="P-loop containing nucleoside triphosphate hydrolases"/>
    <property type="match status" value="1"/>
</dbReference>
<dbReference type="SUPFAM" id="SSF50447">
    <property type="entry name" value="Translation proteins"/>
    <property type="match status" value="1"/>
</dbReference>
<dbReference type="PROSITE" id="PS00301">
    <property type="entry name" value="G_TR_1"/>
    <property type="match status" value="1"/>
</dbReference>
<dbReference type="PROSITE" id="PS51722">
    <property type="entry name" value="G_TR_2"/>
    <property type="match status" value="1"/>
</dbReference>
<name>LEPA_STRP6</name>
<comment type="function">
    <text evidence="1">Required for accurate and efficient protein synthesis under certain stress conditions. May act as a fidelity factor of the translation reaction, by catalyzing a one-codon backward translocation of tRNAs on improperly translocated ribosomes. Back-translocation proceeds from a post-translocation (POST) complex to a pre-translocation (PRE) complex, thus giving elongation factor G a second chance to translocate the tRNAs correctly. Binds to ribosomes in a GTP-dependent manner.</text>
</comment>
<comment type="catalytic activity">
    <reaction evidence="1">
        <text>GTP + H2O = GDP + phosphate + H(+)</text>
        <dbReference type="Rhea" id="RHEA:19669"/>
        <dbReference type="ChEBI" id="CHEBI:15377"/>
        <dbReference type="ChEBI" id="CHEBI:15378"/>
        <dbReference type="ChEBI" id="CHEBI:37565"/>
        <dbReference type="ChEBI" id="CHEBI:43474"/>
        <dbReference type="ChEBI" id="CHEBI:58189"/>
        <dbReference type="EC" id="3.6.5.n1"/>
    </reaction>
</comment>
<comment type="subcellular location">
    <subcellularLocation>
        <location evidence="1">Cell membrane</location>
        <topology evidence="1">Peripheral membrane protein</topology>
        <orientation evidence="1">Cytoplasmic side</orientation>
    </subcellularLocation>
</comment>
<comment type="similarity">
    <text evidence="1">Belongs to the TRAFAC class translation factor GTPase superfamily. Classic translation factor GTPase family. LepA subfamily.</text>
</comment>
<organism>
    <name type="scientific">Streptococcus pyogenes serotype M6 (strain ATCC BAA-946 / MGAS10394)</name>
    <dbReference type="NCBI Taxonomy" id="286636"/>
    <lineage>
        <taxon>Bacteria</taxon>
        <taxon>Bacillati</taxon>
        <taxon>Bacillota</taxon>
        <taxon>Bacilli</taxon>
        <taxon>Lactobacillales</taxon>
        <taxon>Streptococcaceae</taxon>
        <taxon>Streptococcus</taxon>
    </lineage>
</organism>
<accession>Q5XCD2</accession>
<protein>
    <recommendedName>
        <fullName evidence="1">Elongation factor 4</fullName>
        <shortName evidence="1">EF-4</shortName>
        <ecNumber evidence="1">3.6.5.n1</ecNumber>
    </recommendedName>
    <alternativeName>
        <fullName evidence="1">Ribosomal back-translocase LepA</fullName>
    </alternativeName>
</protein>
<sequence length="610" mass="68131">MNSQDLKKRQEKIRNFSIIAHIDHGKSTLADRILEKTETVSSREMQAQLLDSMDLERERGITIKLNAIELNYTAKDGETYIFHLIDTPGHVDFTYEVSRSLAACEGAILVVDAAQGIEAQTLANVYLALDNDLEILPVINKIDLPAADPERVRHEVEDVIGLDASEAVLASAKAGIGIEEILEQIVEKVPAPTGDVDAPLQALIFDSVYDAYRGVILQVRIVNGIVKPGDKIQMMSNGKTFDVTEVGIFTPKAVGRDFLATGDVGYVAASIKTVADTRVGDTVTLANNPAKEALHGYKQMNPMVFAGIYPIESNKYNDLREALEKLQLNDASLQFEPETSQALGFGFRCGFLGLLHMDVIQERLEREFNIDLIMTAPSVVYHVHTTDEDMIEVSNPSEFPAPTRVAFIEEPYVKAQIMVPQEFVGAVMELSQRKRGDFVTMDYIDDNRVNVIYQIPLAEIVFDFFDKLKSSTRGYASFDYDMSEYRRSQLVKMDILLNGDKVDALSFIVHKEFAYERGKIIVEKLKKIIPRQQFEVPIQAAIGQKIVARSDIKALRKNVLAKCYGGDVSRKRKLLEKQKAGKKRMKAIGSVEVPQEAFLSVLSMDEDAKK</sequence>
<proteinExistence type="inferred from homology"/>